<sequence>MIVEVFFRNFYRNFAKFEIDAVDKREFAFQPFSGGMVRHKSFKSLEDLRKFVVEKTPRHIYHSAAYYERPGEEDMERKGWIGADLIFDIDGDHLDTEACRESKIVSLRCLEDAREEANKLIDVLIQELDLKPTRIVFSGNRGFHIHVSSEEVMKLGSRERRELVNYLKAVGFDPSRFIAKLGRRKVVLYEEEAVGNLLRIKQGVEDARAMKVEIDEVVTQDIHRLIRAPGSLNGKTGLVALPISLKELDKGVEYIVDKAIAFRKGHLKFKFEKPVEGPVLFEKVGGREGDVKVLPAYVAIYLELQEFGKIYD</sequence>
<evidence type="ECO:0000255" key="1">
    <source>
        <dbReference type="HAMAP-Rule" id="MF_00700"/>
    </source>
</evidence>
<proteinExistence type="inferred from homology"/>
<comment type="function">
    <text evidence="1">Catalytic subunit of DNA primase, an RNA polymerase that catalyzes the synthesis of short RNA molecules used as primers for DNA polymerase during DNA replication. The small subunit contains the primase catalytic core and has DNA synthesis activity on its own. Binding to the large subunit stabilizes and modulates the activity, increasing the rate of DNA synthesis while decreasing the length of the DNA fragments, and conferring RNA synthesis capability. The DNA polymerase activity may enable DNA primase to also catalyze primer extension after primer synthesis. May also play a role in DNA repair.</text>
</comment>
<comment type="cofactor">
    <cofactor evidence="1">
        <name>Mg(2+)</name>
        <dbReference type="ChEBI" id="CHEBI:18420"/>
    </cofactor>
    <cofactor evidence="1">
        <name>Mn(2+)</name>
        <dbReference type="ChEBI" id="CHEBI:29035"/>
    </cofactor>
</comment>
<comment type="subunit">
    <text evidence="1">Heterodimer of a small subunit (PriS) and a large subunit (PriL).</text>
</comment>
<comment type="similarity">
    <text evidence="1">Belongs to the eukaryotic-type primase small subunit family.</text>
</comment>
<gene>
    <name evidence="1" type="primary">priS</name>
    <name type="synonym">priA</name>
    <name type="ordered locus">PAE3036</name>
</gene>
<reference key="1">
    <citation type="journal article" date="2002" name="Proc. Natl. Acad. Sci. U.S.A.">
        <title>Genome sequence of the hyperthermophilic crenarchaeon Pyrobaculum aerophilum.</title>
        <authorList>
            <person name="Fitz-Gibbon S.T."/>
            <person name="Ladner H."/>
            <person name="Kim U.-J."/>
            <person name="Stetter K.O."/>
            <person name="Simon M.I."/>
            <person name="Miller J.H."/>
        </authorList>
    </citation>
    <scope>NUCLEOTIDE SEQUENCE [LARGE SCALE GENOMIC DNA]</scope>
    <source>
        <strain>ATCC 51768 / DSM 7523 / JCM 9630 / CIP 104966 / NBRC 100827 / IM2</strain>
    </source>
</reference>
<name>PRIS_PYRAE</name>
<keyword id="KW-0235">DNA replication</keyword>
<keyword id="KW-0240">DNA-directed RNA polymerase</keyword>
<keyword id="KW-0460">Magnesium</keyword>
<keyword id="KW-0464">Manganese</keyword>
<keyword id="KW-0479">Metal-binding</keyword>
<keyword id="KW-0548">Nucleotidyltransferase</keyword>
<keyword id="KW-0639">Primosome</keyword>
<keyword id="KW-1185">Reference proteome</keyword>
<keyword id="KW-0804">Transcription</keyword>
<keyword id="KW-0808">Transferase</keyword>
<accession>Q8ZTY1</accession>
<feature type="chain" id="PRO_0000046749" description="DNA primase small subunit PriS">
    <location>
        <begin position="1"/>
        <end position="312"/>
    </location>
</feature>
<feature type="active site" evidence="1">
    <location>
        <position position="88"/>
    </location>
</feature>
<feature type="active site" evidence="1">
    <location>
        <position position="90"/>
    </location>
</feature>
<feature type="active site" evidence="1">
    <location>
        <position position="215"/>
    </location>
</feature>
<organism>
    <name type="scientific">Pyrobaculum aerophilum (strain ATCC 51768 / DSM 7523 / JCM 9630 / CIP 104966 / NBRC 100827 / IM2)</name>
    <dbReference type="NCBI Taxonomy" id="178306"/>
    <lineage>
        <taxon>Archaea</taxon>
        <taxon>Thermoproteota</taxon>
        <taxon>Thermoprotei</taxon>
        <taxon>Thermoproteales</taxon>
        <taxon>Thermoproteaceae</taxon>
        <taxon>Pyrobaculum</taxon>
    </lineage>
</organism>
<protein>
    <recommendedName>
        <fullName evidence="1">DNA primase small subunit PriS</fullName>
        <ecNumber evidence="1">2.7.7.-</ecNumber>
    </recommendedName>
</protein>
<dbReference type="EC" id="2.7.7.-" evidence="1"/>
<dbReference type="EMBL" id="AE009441">
    <property type="protein sequence ID" value="AAL64628.1"/>
    <property type="molecule type" value="Genomic_DNA"/>
</dbReference>
<dbReference type="RefSeq" id="WP_011009096.1">
    <property type="nucleotide sequence ID" value="NC_003364.1"/>
</dbReference>
<dbReference type="SMR" id="Q8ZTY1"/>
<dbReference type="STRING" id="178306.PAE3036"/>
<dbReference type="EnsemblBacteria" id="AAL64628">
    <property type="protein sequence ID" value="AAL64628"/>
    <property type="gene ID" value="PAE3036"/>
</dbReference>
<dbReference type="GeneID" id="1463797"/>
<dbReference type="KEGG" id="pai:PAE3036"/>
<dbReference type="PATRIC" id="fig|178306.9.peg.2285"/>
<dbReference type="eggNOG" id="arCOG04110">
    <property type="taxonomic scope" value="Archaea"/>
</dbReference>
<dbReference type="HOGENOM" id="CLU_056123_1_0_2"/>
<dbReference type="InParanoid" id="Q8ZTY1"/>
<dbReference type="Proteomes" id="UP000002439">
    <property type="component" value="Chromosome"/>
</dbReference>
<dbReference type="GO" id="GO:0000428">
    <property type="term" value="C:DNA-directed RNA polymerase complex"/>
    <property type="evidence" value="ECO:0007669"/>
    <property type="project" value="UniProtKB-KW"/>
</dbReference>
<dbReference type="GO" id="GO:1990077">
    <property type="term" value="C:primosome complex"/>
    <property type="evidence" value="ECO:0007669"/>
    <property type="project" value="UniProtKB-KW"/>
</dbReference>
<dbReference type="GO" id="GO:0003899">
    <property type="term" value="F:DNA-directed RNA polymerase activity"/>
    <property type="evidence" value="ECO:0007669"/>
    <property type="project" value="InterPro"/>
</dbReference>
<dbReference type="GO" id="GO:0046872">
    <property type="term" value="F:metal ion binding"/>
    <property type="evidence" value="ECO:0007669"/>
    <property type="project" value="UniProtKB-KW"/>
</dbReference>
<dbReference type="GO" id="GO:0006269">
    <property type="term" value="P:DNA replication, synthesis of primer"/>
    <property type="evidence" value="ECO:0000318"/>
    <property type="project" value="GO_Central"/>
</dbReference>
<dbReference type="CDD" id="cd04860">
    <property type="entry name" value="AE_Prim_S"/>
    <property type="match status" value="1"/>
</dbReference>
<dbReference type="Gene3D" id="3.90.920.10">
    <property type="entry name" value="DNA primase, PRIM domain"/>
    <property type="match status" value="1"/>
</dbReference>
<dbReference type="HAMAP" id="MF_00700">
    <property type="entry name" value="DNA_primase_sml_arc"/>
    <property type="match status" value="1"/>
</dbReference>
<dbReference type="InterPro" id="IPR002755">
    <property type="entry name" value="DNA_primase_S"/>
</dbReference>
<dbReference type="InterPro" id="IPR014052">
    <property type="entry name" value="DNA_primase_ssu_euk/arc"/>
</dbReference>
<dbReference type="InterPro" id="IPR023639">
    <property type="entry name" value="DNA_primase_ssu_PriS"/>
</dbReference>
<dbReference type="NCBIfam" id="TIGR00335">
    <property type="entry name" value="primase_sml"/>
    <property type="match status" value="1"/>
</dbReference>
<dbReference type="PANTHER" id="PTHR10536">
    <property type="entry name" value="DNA PRIMASE SMALL SUBUNIT"/>
    <property type="match status" value="1"/>
</dbReference>
<dbReference type="Pfam" id="PF01896">
    <property type="entry name" value="DNA_primase_S"/>
    <property type="match status" value="1"/>
</dbReference>
<dbReference type="SUPFAM" id="SSF56747">
    <property type="entry name" value="Prim-pol domain"/>
    <property type="match status" value="1"/>
</dbReference>